<proteinExistence type="inferred from homology"/>
<sequence length="188" mass="21104">MSIKSDRWIRHMAEEHGMIEPFSPRQVRHVEGNSIISYGLSSYGYDIRCAGEFKVFTNVRSVIVDPKNFSEHSFVDFTGDTCIIPPNSFALARTLEYFRIPRNVLTICLGKSTYARCGIIVNVTPFEPEWEGYVTLEFSNTTPLPAKIYANEGVAQVLFLESDEVCEVSYADRGGKYQGQSGVTLPKA</sequence>
<reference key="1">
    <citation type="journal article" date="2008" name="BMC Genomics">
        <title>Acidithiobacillus ferrooxidans metabolism: from genome sequence to industrial applications.</title>
        <authorList>
            <person name="Valdes J."/>
            <person name="Pedroso I."/>
            <person name="Quatrini R."/>
            <person name="Dodson R.J."/>
            <person name="Tettelin H."/>
            <person name="Blake R. II"/>
            <person name="Eisen J.A."/>
            <person name="Holmes D.S."/>
        </authorList>
    </citation>
    <scope>NUCLEOTIDE SEQUENCE [LARGE SCALE GENOMIC DNA]</scope>
    <source>
        <strain>ATCC 23270 / DSM 14882 / CIP 104768 / NCIMB 8455</strain>
    </source>
</reference>
<keyword id="KW-0378">Hydrolase</keyword>
<keyword id="KW-0546">Nucleotide metabolism</keyword>
<keyword id="KW-0547">Nucleotide-binding</keyword>
<keyword id="KW-1185">Reference proteome</keyword>
<gene>
    <name evidence="1" type="primary">dcd</name>
    <name type="ordered locus">AFE_2660</name>
</gene>
<protein>
    <recommendedName>
        <fullName evidence="1">dCTP deaminase</fullName>
        <ecNumber evidence="1">3.5.4.13</ecNumber>
    </recommendedName>
    <alternativeName>
        <fullName evidence="1">Deoxycytidine triphosphate deaminase</fullName>
    </alternativeName>
</protein>
<dbReference type="EC" id="3.5.4.13" evidence="1"/>
<dbReference type="EMBL" id="CP001219">
    <property type="protein sequence ID" value="ACK80821.1"/>
    <property type="molecule type" value="Genomic_DNA"/>
</dbReference>
<dbReference type="RefSeq" id="WP_012537322.1">
    <property type="nucleotide sequence ID" value="NC_011761.1"/>
</dbReference>
<dbReference type="SMR" id="B7J7X4"/>
<dbReference type="STRING" id="243159.AFE_2660"/>
<dbReference type="PaxDb" id="243159-AFE_2660"/>
<dbReference type="GeneID" id="65281705"/>
<dbReference type="KEGG" id="afr:AFE_2660"/>
<dbReference type="eggNOG" id="COG0717">
    <property type="taxonomic scope" value="Bacteria"/>
</dbReference>
<dbReference type="HOGENOM" id="CLU_087476_4_0_6"/>
<dbReference type="UniPathway" id="UPA00610">
    <property type="reaction ID" value="UER00665"/>
</dbReference>
<dbReference type="Proteomes" id="UP000001362">
    <property type="component" value="Chromosome"/>
</dbReference>
<dbReference type="GO" id="GO:0008829">
    <property type="term" value="F:dCTP deaminase activity"/>
    <property type="evidence" value="ECO:0007669"/>
    <property type="project" value="UniProtKB-UniRule"/>
</dbReference>
<dbReference type="GO" id="GO:0000166">
    <property type="term" value="F:nucleotide binding"/>
    <property type="evidence" value="ECO:0007669"/>
    <property type="project" value="UniProtKB-KW"/>
</dbReference>
<dbReference type="GO" id="GO:0006226">
    <property type="term" value="P:dUMP biosynthetic process"/>
    <property type="evidence" value="ECO:0007669"/>
    <property type="project" value="UniProtKB-UniPathway"/>
</dbReference>
<dbReference type="GO" id="GO:0006229">
    <property type="term" value="P:dUTP biosynthetic process"/>
    <property type="evidence" value="ECO:0007669"/>
    <property type="project" value="UniProtKB-UniRule"/>
</dbReference>
<dbReference type="GO" id="GO:0015949">
    <property type="term" value="P:nucleobase-containing small molecule interconversion"/>
    <property type="evidence" value="ECO:0007669"/>
    <property type="project" value="TreeGrafter"/>
</dbReference>
<dbReference type="CDD" id="cd07557">
    <property type="entry name" value="trimeric_dUTPase"/>
    <property type="match status" value="1"/>
</dbReference>
<dbReference type="FunFam" id="2.70.40.10:FF:000001">
    <property type="entry name" value="dCTP deaminase"/>
    <property type="match status" value="1"/>
</dbReference>
<dbReference type="Gene3D" id="2.70.40.10">
    <property type="match status" value="1"/>
</dbReference>
<dbReference type="HAMAP" id="MF_00146">
    <property type="entry name" value="dCTP_deaminase"/>
    <property type="match status" value="1"/>
</dbReference>
<dbReference type="InterPro" id="IPR011962">
    <property type="entry name" value="dCTP_deaminase"/>
</dbReference>
<dbReference type="InterPro" id="IPR036157">
    <property type="entry name" value="dUTPase-like_sf"/>
</dbReference>
<dbReference type="InterPro" id="IPR033704">
    <property type="entry name" value="dUTPase_trimeric"/>
</dbReference>
<dbReference type="NCBIfam" id="TIGR02274">
    <property type="entry name" value="dCTP_deam"/>
    <property type="match status" value="1"/>
</dbReference>
<dbReference type="PANTHER" id="PTHR42680">
    <property type="entry name" value="DCTP DEAMINASE"/>
    <property type="match status" value="1"/>
</dbReference>
<dbReference type="PANTHER" id="PTHR42680:SF3">
    <property type="entry name" value="DCTP DEAMINASE"/>
    <property type="match status" value="1"/>
</dbReference>
<dbReference type="Pfam" id="PF22769">
    <property type="entry name" value="DCD"/>
    <property type="match status" value="1"/>
</dbReference>
<dbReference type="SUPFAM" id="SSF51283">
    <property type="entry name" value="dUTPase-like"/>
    <property type="match status" value="1"/>
</dbReference>
<name>DCD_ACIF2</name>
<evidence type="ECO:0000255" key="1">
    <source>
        <dbReference type="HAMAP-Rule" id="MF_00146"/>
    </source>
</evidence>
<accession>B7J7X4</accession>
<feature type="chain" id="PRO_1000189820" description="dCTP deaminase">
    <location>
        <begin position="1"/>
        <end position="188"/>
    </location>
</feature>
<feature type="active site" description="Proton donor/acceptor" evidence="1">
    <location>
        <position position="137"/>
    </location>
</feature>
<feature type="binding site" evidence="1">
    <location>
        <begin position="111"/>
        <end position="116"/>
    </location>
    <ligand>
        <name>dCTP</name>
        <dbReference type="ChEBI" id="CHEBI:61481"/>
    </ligand>
</feature>
<feature type="binding site" evidence="1">
    <location>
        <begin position="135"/>
        <end position="137"/>
    </location>
    <ligand>
        <name>dCTP</name>
        <dbReference type="ChEBI" id="CHEBI:61481"/>
    </ligand>
</feature>
<feature type="binding site" evidence="1">
    <location>
        <position position="156"/>
    </location>
    <ligand>
        <name>dCTP</name>
        <dbReference type="ChEBI" id="CHEBI:61481"/>
    </ligand>
</feature>
<feature type="binding site" evidence="1">
    <location>
        <position position="170"/>
    </location>
    <ligand>
        <name>dCTP</name>
        <dbReference type="ChEBI" id="CHEBI:61481"/>
    </ligand>
</feature>
<feature type="binding site" evidence="1">
    <location>
        <position position="180"/>
    </location>
    <ligand>
        <name>dCTP</name>
        <dbReference type="ChEBI" id="CHEBI:61481"/>
    </ligand>
</feature>
<organism>
    <name type="scientific">Acidithiobacillus ferrooxidans (strain ATCC 23270 / DSM 14882 / CIP 104768 / NCIMB 8455)</name>
    <name type="common">Ferrobacillus ferrooxidans (strain ATCC 23270)</name>
    <dbReference type="NCBI Taxonomy" id="243159"/>
    <lineage>
        <taxon>Bacteria</taxon>
        <taxon>Pseudomonadati</taxon>
        <taxon>Pseudomonadota</taxon>
        <taxon>Acidithiobacillia</taxon>
        <taxon>Acidithiobacillales</taxon>
        <taxon>Acidithiobacillaceae</taxon>
        <taxon>Acidithiobacillus</taxon>
    </lineage>
</organism>
<comment type="function">
    <text evidence="1">Catalyzes the deamination of dCTP to dUTP.</text>
</comment>
<comment type="catalytic activity">
    <reaction evidence="1">
        <text>dCTP + H2O + H(+) = dUTP + NH4(+)</text>
        <dbReference type="Rhea" id="RHEA:22680"/>
        <dbReference type="ChEBI" id="CHEBI:15377"/>
        <dbReference type="ChEBI" id="CHEBI:15378"/>
        <dbReference type="ChEBI" id="CHEBI:28938"/>
        <dbReference type="ChEBI" id="CHEBI:61481"/>
        <dbReference type="ChEBI" id="CHEBI:61555"/>
        <dbReference type="EC" id="3.5.4.13"/>
    </reaction>
</comment>
<comment type="pathway">
    <text evidence="1">Pyrimidine metabolism; dUMP biosynthesis; dUMP from dCTP (dUTP route): step 1/2.</text>
</comment>
<comment type="subunit">
    <text evidence="1">Homotrimer.</text>
</comment>
<comment type="similarity">
    <text evidence="1">Belongs to the dCTP deaminase family.</text>
</comment>